<feature type="chain" id="PRO_1000197859" description="Sec-independent protein translocase protein TatA">
    <location>
        <begin position="1"/>
        <end position="76"/>
    </location>
</feature>
<feature type="transmembrane region" description="Helical" evidence="1">
    <location>
        <begin position="1"/>
        <end position="21"/>
    </location>
</feature>
<feature type="region of interest" description="Disordered" evidence="2">
    <location>
        <begin position="43"/>
        <end position="76"/>
    </location>
</feature>
<feature type="compositionally biased region" description="Basic and acidic residues" evidence="2">
    <location>
        <begin position="64"/>
        <end position="76"/>
    </location>
</feature>
<reference key="1">
    <citation type="submission" date="2007-10" db="EMBL/GenBank/DDBJ databases">
        <title>Complete sequence of chromosome 1 of Burkholderia multivorans ATCC 17616.</title>
        <authorList>
            <person name="Copeland A."/>
            <person name="Lucas S."/>
            <person name="Lapidus A."/>
            <person name="Barry K."/>
            <person name="Glavina del Rio T."/>
            <person name="Dalin E."/>
            <person name="Tice H."/>
            <person name="Pitluck S."/>
            <person name="Chain P."/>
            <person name="Malfatti S."/>
            <person name="Shin M."/>
            <person name="Vergez L."/>
            <person name="Schmutz J."/>
            <person name="Larimer F."/>
            <person name="Land M."/>
            <person name="Hauser L."/>
            <person name="Kyrpides N."/>
            <person name="Kim E."/>
            <person name="Tiedje J."/>
            <person name="Richardson P."/>
        </authorList>
    </citation>
    <scope>NUCLEOTIDE SEQUENCE [LARGE SCALE GENOMIC DNA]</scope>
    <source>
        <strain>ATCC 17616 / 249</strain>
    </source>
</reference>
<reference key="2">
    <citation type="submission" date="2007-04" db="EMBL/GenBank/DDBJ databases">
        <title>Complete genome sequence of Burkholderia multivorans ATCC 17616.</title>
        <authorList>
            <person name="Ohtsubo Y."/>
            <person name="Yamashita A."/>
            <person name="Kurokawa K."/>
            <person name="Takami H."/>
            <person name="Yuhara S."/>
            <person name="Nishiyama E."/>
            <person name="Endo R."/>
            <person name="Miyazaki R."/>
            <person name="Ono A."/>
            <person name="Yano K."/>
            <person name="Ito M."/>
            <person name="Sota M."/>
            <person name="Yuji N."/>
            <person name="Hattori M."/>
            <person name="Tsuda M."/>
        </authorList>
    </citation>
    <scope>NUCLEOTIDE SEQUENCE [LARGE SCALE GENOMIC DNA]</scope>
    <source>
        <strain>ATCC 17616 / 249</strain>
    </source>
</reference>
<evidence type="ECO:0000255" key="1">
    <source>
        <dbReference type="HAMAP-Rule" id="MF_00236"/>
    </source>
</evidence>
<evidence type="ECO:0000256" key="2">
    <source>
        <dbReference type="SAM" id="MobiDB-lite"/>
    </source>
</evidence>
<name>TATA_BURM1</name>
<protein>
    <recommendedName>
        <fullName evidence="1">Sec-independent protein translocase protein TatA</fullName>
    </recommendedName>
</protein>
<accession>A9AE12</accession>
<sequence>MGGLSIWHWLIVLLIVALVFGTKKLRNIGNDLGSAVKGFKDGMKDGDAPADAQQLPRSGTVDVNAKEATRSDSNKA</sequence>
<comment type="function">
    <text evidence="1">Part of the twin-arginine translocation (Tat) system that transports large folded proteins containing a characteristic twin-arginine motif in their signal peptide across membranes. TatA could form the protein-conducting channel of the Tat system.</text>
</comment>
<comment type="subunit">
    <text evidence="1">The Tat system comprises two distinct complexes: a TatABC complex, containing multiple copies of TatA, TatB and TatC subunits, and a separate TatA complex, containing only TatA subunits. Substrates initially bind to the TatABC complex, which probably triggers association of the separate TatA complex to form the active translocon.</text>
</comment>
<comment type="subcellular location">
    <subcellularLocation>
        <location evidence="1">Cell inner membrane</location>
        <topology evidence="1">Single-pass membrane protein</topology>
    </subcellularLocation>
</comment>
<comment type="similarity">
    <text evidence="1">Belongs to the TatA/E family.</text>
</comment>
<proteinExistence type="inferred from homology"/>
<gene>
    <name evidence="1" type="primary">tatA</name>
    <name type="ordered locus">Bmul_0339</name>
    <name type="ordered locus">BMULJ_02915</name>
</gene>
<keyword id="KW-0997">Cell inner membrane</keyword>
<keyword id="KW-1003">Cell membrane</keyword>
<keyword id="KW-0472">Membrane</keyword>
<keyword id="KW-0653">Protein transport</keyword>
<keyword id="KW-1185">Reference proteome</keyword>
<keyword id="KW-0811">Translocation</keyword>
<keyword id="KW-0812">Transmembrane</keyword>
<keyword id="KW-1133">Transmembrane helix</keyword>
<keyword id="KW-0813">Transport</keyword>
<organism>
    <name type="scientific">Burkholderia multivorans (strain ATCC 17616 / 249)</name>
    <dbReference type="NCBI Taxonomy" id="395019"/>
    <lineage>
        <taxon>Bacteria</taxon>
        <taxon>Pseudomonadati</taxon>
        <taxon>Pseudomonadota</taxon>
        <taxon>Betaproteobacteria</taxon>
        <taxon>Burkholderiales</taxon>
        <taxon>Burkholderiaceae</taxon>
        <taxon>Burkholderia</taxon>
        <taxon>Burkholderia cepacia complex</taxon>
    </lineage>
</organism>
<dbReference type="EMBL" id="CP000868">
    <property type="protein sequence ID" value="ABX14034.1"/>
    <property type="molecule type" value="Genomic_DNA"/>
</dbReference>
<dbReference type="EMBL" id="AP009385">
    <property type="protein sequence ID" value="BAG44800.1"/>
    <property type="molecule type" value="Genomic_DNA"/>
</dbReference>
<dbReference type="RefSeq" id="WP_006400573.1">
    <property type="nucleotide sequence ID" value="NC_010804.1"/>
</dbReference>
<dbReference type="SMR" id="A9AE12"/>
<dbReference type="STRING" id="395019.BMULJ_02915"/>
<dbReference type="GeneID" id="89568729"/>
<dbReference type="KEGG" id="bmj:BMULJ_02915"/>
<dbReference type="KEGG" id="bmu:Bmul_0339"/>
<dbReference type="eggNOG" id="COG1826">
    <property type="taxonomic scope" value="Bacteria"/>
</dbReference>
<dbReference type="HOGENOM" id="CLU_086034_5_3_4"/>
<dbReference type="Proteomes" id="UP000008815">
    <property type="component" value="Chromosome 1"/>
</dbReference>
<dbReference type="GO" id="GO:0033281">
    <property type="term" value="C:TAT protein transport complex"/>
    <property type="evidence" value="ECO:0007669"/>
    <property type="project" value="UniProtKB-UniRule"/>
</dbReference>
<dbReference type="GO" id="GO:0008320">
    <property type="term" value="F:protein transmembrane transporter activity"/>
    <property type="evidence" value="ECO:0007669"/>
    <property type="project" value="UniProtKB-UniRule"/>
</dbReference>
<dbReference type="GO" id="GO:0043953">
    <property type="term" value="P:protein transport by the Tat complex"/>
    <property type="evidence" value="ECO:0007669"/>
    <property type="project" value="UniProtKB-UniRule"/>
</dbReference>
<dbReference type="Gene3D" id="1.20.5.3310">
    <property type="match status" value="1"/>
</dbReference>
<dbReference type="HAMAP" id="MF_00236">
    <property type="entry name" value="TatA_E"/>
    <property type="match status" value="1"/>
</dbReference>
<dbReference type="InterPro" id="IPR003369">
    <property type="entry name" value="TatA/B/E"/>
</dbReference>
<dbReference type="InterPro" id="IPR006312">
    <property type="entry name" value="TatA/E"/>
</dbReference>
<dbReference type="NCBIfam" id="NF002813">
    <property type="entry name" value="PRK02958.1"/>
    <property type="match status" value="1"/>
</dbReference>
<dbReference type="NCBIfam" id="TIGR01411">
    <property type="entry name" value="tatAE"/>
    <property type="match status" value="1"/>
</dbReference>
<dbReference type="PANTHER" id="PTHR42982">
    <property type="entry name" value="SEC-INDEPENDENT PROTEIN TRANSLOCASE PROTEIN TATA"/>
    <property type="match status" value="1"/>
</dbReference>
<dbReference type="PANTHER" id="PTHR42982:SF1">
    <property type="entry name" value="SEC-INDEPENDENT PROTEIN TRANSLOCASE PROTEIN TATA"/>
    <property type="match status" value="1"/>
</dbReference>
<dbReference type="Pfam" id="PF02416">
    <property type="entry name" value="TatA_B_E"/>
    <property type="match status" value="1"/>
</dbReference>